<protein>
    <recommendedName>
        <fullName evidence="1">Probable glycine dehydrogenase (decarboxylating) subunit 2</fullName>
        <ecNumber evidence="1">1.4.4.2</ecNumber>
    </recommendedName>
    <alternativeName>
        <fullName evidence="1">Glycine cleavage system P-protein subunit 2</fullName>
    </alternativeName>
    <alternativeName>
        <fullName evidence="1">Glycine decarboxylase subunit 2</fullName>
    </alternativeName>
    <alternativeName>
        <fullName evidence="1">Glycine dehydrogenase (aminomethyl-transferring) subunit 2</fullName>
    </alternativeName>
</protein>
<sequence>MSNKNFPLIFERSKEGRTSYSLPELDVESFDLEAELGSEYVRQTPPELPEVSELDIIRHYTGLSNRNYGVDSGFYPLGSCTMKYNPKINEDIARLDGFSHIHPYQDVSTVQGAMAMMFDLQESLKEITGMHEVSLQSAAGAQGEWTALMMIRAFHESRGDYGRTKVIVPDSAHGTNPASAAVAGFEAVTVKSNQEGLVDLDDLRQVVGEDTAALMLTNPNTLGLFEKDILTMAEIVHEAGGKLYYDGANLNAIMGYVRPGDMGFDAVHLNLHKTFTGPHGGGGPGSGPVGVSEELAAFLPKPLIVKKNDGYDFDENRPQSIGRVKPFYGNFGINLRAYTYIRTMGAEGLKKVSEYAVLNANYMMRQLEDVFELPYPQHCKHEFVLSGSKQKKLGVRTLDMAKRLLDFGYHPPTIYFPLNVEEGLMVEPTETESKETLDGFIDTMRTIAKEVEENPEIVQEAPHQTIVKRMDETRAARKPVLRYHP</sequence>
<name>GCSPB_OCEIH</name>
<reference key="1">
    <citation type="journal article" date="2002" name="Nucleic Acids Res.">
        <title>Genome sequence of Oceanobacillus iheyensis isolated from the Iheya Ridge and its unexpected adaptive capabilities to extreme environments.</title>
        <authorList>
            <person name="Takami H."/>
            <person name="Takaki Y."/>
            <person name="Uchiyama I."/>
        </authorList>
    </citation>
    <scope>NUCLEOTIDE SEQUENCE [LARGE SCALE GENOMIC DNA]</scope>
    <source>
        <strain>DSM 14371 / CIP 107618 / JCM 11309 / KCTC 3954 / HTE831</strain>
    </source>
</reference>
<comment type="function">
    <text evidence="1">The glycine cleavage system catalyzes the degradation of glycine. The P protein binds the alpha-amino group of glycine through its pyridoxal phosphate cofactor; CO(2) is released and the remaining methylamine moiety is then transferred to the lipoamide cofactor of the H protein.</text>
</comment>
<comment type="catalytic activity">
    <reaction evidence="1">
        <text>N(6)-[(R)-lipoyl]-L-lysyl-[glycine-cleavage complex H protein] + glycine + H(+) = N(6)-[(R)-S(8)-aminomethyldihydrolipoyl]-L-lysyl-[glycine-cleavage complex H protein] + CO2</text>
        <dbReference type="Rhea" id="RHEA:24304"/>
        <dbReference type="Rhea" id="RHEA-COMP:10494"/>
        <dbReference type="Rhea" id="RHEA-COMP:10495"/>
        <dbReference type="ChEBI" id="CHEBI:15378"/>
        <dbReference type="ChEBI" id="CHEBI:16526"/>
        <dbReference type="ChEBI" id="CHEBI:57305"/>
        <dbReference type="ChEBI" id="CHEBI:83099"/>
        <dbReference type="ChEBI" id="CHEBI:83143"/>
        <dbReference type="EC" id="1.4.4.2"/>
    </reaction>
</comment>
<comment type="cofactor">
    <cofactor evidence="1">
        <name>pyridoxal 5'-phosphate</name>
        <dbReference type="ChEBI" id="CHEBI:597326"/>
    </cofactor>
</comment>
<comment type="subunit">
    <text evidence="1">The glycine cleavage system is composed of four proteins: P, T, L and H. In this organism, the P 'protein' is a heterodimer of two subunits.</text>
</comment>
<comment type="similarity">
    <text evidence="1">Belongs to the GcvP family. C-terminal subunit subfamily.</text>
</comment>
<organism>
    <name type="scientific">Oceanobacillus iheyensis (strain DSM 14371 / CIP 107618 / JCM 11309 / KCTC 3954 / HTE831)</name>
    <dbReference type="NCBI Taxonomy" id="221109"/>
    <lineage>
        <taxon>Bacteria</taxon>
        <taxon>Bacillati</taxon>
        <taxon>Bacillota</taxon>
        <taxon>Bacilli</taxon>
        <taxon>Bacillales</taxon>
        <taxon>Bacillaceae</taxon>
        <taxon>Oceanobacillus</taxon>
    </lineage>
</organism>
<feature type="chain" id="PRO_0000167009" description="Probable glycine dehydrogenase (decarboxylating) subunit 2">
    <location>
        <begin position="1"/>
        <end position="485"/>
    </location>
</feature>
<feature type="modified residue" description="N6-(pyridoxal phosphate)lysine" evidence="1">
    <location>
        <position position="273"/>
    </location>
</feature>
<evidence type="ECO:0000255" key="1">
    <source>
        <dbReference type="HAMAP-Rule" id="MF_00713"/>
    </source>
</evidence>
<keyword id="KW-0560">Oxidoreductase</keyword>
<keyword id="KW-0663">Pyridoxal phosphate</keyword>
<keyword id="KW-1185">Reference proteome</keyword>
<proteinExistence type="inferred from homology"/>
<accession>Q8CXE1</accession>
<gene>
    <name evidence="1" type="primary">gcvPB</name>
    <name type="ordered locus">OB1902</name>
</gene>
<dbReference type="EC" id="1.4.4.2" evidence="1"/>
<dbReference type="EMBL" id="BA000028">
    <property type="protein sequence ID" value="BAC13858.1"/>
    <property type="molecule type" value="Genomic_DNA"/>
</dbReference>
<dbReference type="RefSeq" id="WP_011066299.1">
    <property type="nucleotide sequence ID" value="NC_004193.1"/>
</dbReference>
<dbReference type="SMR" id="Q8CXE1"/>
<dbReference type="STRING" id="221109.gene:10734142"/>
<dbReference type="KEGG" id="oih:OB1902"/>
<dbReference type="eggNOG" id="COG1003">
    <property type="taxonomic scope" value="Bacteria"/>
</dbReference>
<dbReference type="HOGENOM" id="CLU_004620_5_0_9"/>
<dbReference type="OrthoDB" id="9801272at2"/>
<dbReference type="PhylomeDB" id="Q8CXE1"/>
<dbReference type="Proteomes" id="UP000000822">
    <property type="component" value="Chromosome"/>
</dbReference>
<dbReference type="GO" id="GO:0005829">
    <property type="term" value="C:cytosol"/>
    <property type="evidence" value="ECO:0007669"/>
    <property type="project" value="TreeGrafter"/>
</dbReference>
<dbReference type="GO" id="GO:0005960">
    <property type="term" value="C:glycine cleavage complex"/>
    <property type="evidence" value="ECO:0007669"/>
    <property type="project" value="TreeGrafter"/>
</dbReference>
<dbReference type="GO" id="GO:0016594">
    <property type="term" value="F:glycine binding"/>
    <property type="evidence" value="ECO:0007669"/>
    <property type="project" value="TreeGrafter"/>
</dbReference>
<dbReference type="GO" id="GO:0004375">
    <property type="term" value="F:glycine dehydrogenase (decarboxylating) activity"/>
    <property type="evidence" value="ECO:0007669"/>
    <property type="project" value="UniProtKB-EC"/>
</dbReference>
<dbReference type="GO" id="GO:0030170">
    <property type="term" value="F:pyridoxal phosphate binding"/>
    <property type="evidence" value="ECO:0007669"/>
    <property type="project" value="TreeGrafter"/>
</dbReference>
<dbReference type="GO" id="GO:0019464">
    <property type="term" value="P:glycine decarboxylation via glycine cleavage system"/>
    <property type="evidence" value="ECO:0007669"/>
    <property type="project" value="UniProtKB-UniRule"/>
</dbReference>
<dbReference type="CDD" id="cd00613">
    <property type="entry name" value="GDC-P"/>
    <property type="match status" value="1"/>
</dbReference>
<dbReference type="FunFam" id="3.40.640.10:FF:000034">
    <property type="entry name" value="Probable glycine dehydrogenase (decarboxylating) subunit 2"/>
    <property type="match status" value="1"/>
</dbReference>
<dbReference type="FunFam" id="3.90.1150.10:FF:000014">
    <property type="entry name" value="Probable glycine dehydrogenase (decarboxylating) subunit 2"/>
    <property type="match status" value="1"/>
</dbReference>
<dbReference type="Gene3D" id="6.20.440.10">
    <property type="match status" value="1"/>
</dbReference>
<dbReference type="Gene3D" id="3.90.1150.10">
    <property type="entry name" value="Aspartate Aminotransferase, domain 1"/>
    <property type="match status" value="1"/>
</dbReference>
<dbReference type="Gene3D" id="3.40.640.10">
    <property type="entry name" value="Type I PLP-dependent aspartate aminotransferase-like (Major domain)"/>
    <property type="match status" value="1"/>
</dbReference>
<dbReference type="HAMAP" id="MF_00713">
    <property type="entry name" value="GcvPB"/>
    <property type="match status" value="1"/>
</dbReference>
<dbReference type="InterPro" id="IPR023012">
    <property type="entry name" value="GcvPB"/>
</dbReference>
<dbReference type="InterPro" id="IPR049316">
    <property type="entry name" value="GDC-P_C"/>
</dbReference>
<dbReference type="InterPro" id="IPR049315">
    <property type="entry name" value="GDC-P_N"/>
</dbReference>
<dbReference type="InterPro" id="IPR020581">
    <property type="entry name" value="GDC_P"/>
</dbReference>
<dbReference type="InterPro" id="IPR015424">
    <property type="entry name" value="PyrdxlP-dep_Trfase"/>
</dbReference>
<dbReference type="InterPro" id="IPR015421">
    <property type="entry name" value="PyrdxlP-dep_Trfase_major"/>
</dbReference>
<dbReference type="InterPro" id="IPR015422">
    <property type="entry name" value="PyrdxlP-dep_Trfase_small"/>
</dbReference>
<dbReference type="NCBIfam" id="NF003346">
    <property type="entry name" value="PRK04366.1"/>
    <property type="match status" value="1"/>
</dbReference>
<dbReference type="PANTHER" id="PTHR11773:SF1">
    <property type="entry name" value="GLYCINE DEHYDROGENASE (DECARBOXYLATING), MITOCHONDRIAL"/>
    <property type="match status" value="1"/>
</dbReference>
<dbReference type="PANTHER" id="PTHR11773">
    <property type="entry name" value="GLYCINE DEHYDROGENASE, DECARBOXYLATING"/>
    <property type="match status" value="1"/>
</dbReference>
<dbReference type="Pfam" id="PF21478">
    <property type="entry name" value="GcvP2_C"/>
    <property type="match status" value="1"/>
</dbReference>
<dbReference type="Pfam" id="PF02347">
    <property type="entry name" value="GDC-P"/>
    <property type="match status" value="1"/>
</dbReference>
<dbReference type="SUPFAM" id="SSF53383">
    <property type="entry name" value="PLP-dependent transferases"/>
    <property type="match status" value="1"/>
</dbReference>